<sequence length="647" mass="72080">MSTTSSVRVRLAFVALLSATTFYCIHKYRRLKHLKNLSLNPSSTLKASRGKIFFISQTGTAKALAQRLHELCASNDIAFDIVDPHSYEPEDLPKETLVLFIASTWDGGKPPKNGEFLVNWLGESAEDFRVGSLLLSDCKFAVFGVGSRAYGESYNAVAKELSSRMIGLGGLEMIPVGEGDVDDGELDRAFQDWCDGVIRVLKGGSAQETNGVSQQIGAVEDDLEYYDSTDEEDEDNDADGGIVDLEDIAGKAPSKRNGVVKVTKVDGKKEMVTPVIRASLTKQGYKIIGSHSGVKICRWTKSQLRGRGGCYKHSFYGIESHRCMETTPSLACANKCVFCWRHHTNPVGKSWQWKMDEPSVIVKGALDLHKNMIKQMKGVPGVTPEKLQEGLNPRHCALSLVGEPIMYPEINALVDELHGRRISTFLVTNAQFPEKILMMKPITQLYVSVDAATKESLKAIDRPLFADFWERFIDSLKALQEKQQRTVYRLTLVKGWNTEELDAYFNLFSIGKPDFIEIKGVTYCGSSATSKLTMENVPWHTDVKAFSEALSLKSNGEYEVACEHAHSCCVLLGRTEKFKVDGKWFTWIDYEKFHDLVASGEPFTSTDYMAQTPSWAVYGAQEGGFDPGQLRYKKERNHPPKPQAVLA</sequence>
<keyword id="KW-0004">4Fe-4S</keyword>
<keyword id="KW-0408">Iron</keyword>
<keyword id="KW-0411">Iron-sulfur</keyword>
<keyword id="KW-0456">Lyase</keyword>
<keyword id="KW-0479">Metal-binding</keyword>
<keyword id="KW-0547">Nucleotide-binding</keyword>
<keyword id="KW-1185">Reference proteome</keyword>
<keyword id="KW-0949">S-adenosyl-L-methionine</keyword>
<keyword id="KW-0819">tRNA processing</keyword>
<reference key="1">
    <citation type="journal article" date="2000" name="Nature">
        <title>Sequence and analysis of chromosome 1 of the plant Arabidopsis thaliana.</title>
        <authorList>
            <person name="Theologis A."/>
            <person name="Ecker J.R."/>
            <person name="Palm C.J."/>
            <person name="Federspiel N.A."/>
            <person name="Kaul S."/>
            <person name="White O."/>
            <person name="Alonso J."/>
            <person name="Altafi H."/>
            <person name="Araujo R."/>
            <person name="Bowman C.L."/>
            <person name="Brooks S.Y."/>
            <person name="Buehler E."/>
            <person name="Chan A."/>
            <person name="Chao Q."/>
            <person name="Chen H."/>
            <person name="Cheuk R.F."/>
            <person name="Chin C.W."/>
            <person name="Chung M.K."/>
            <person name="Conn L."/>
            <person name="Conway A.B."/>
            <person name="Conway A.R."/>
            <person name="Creasy T.H."/>
            <person name="Dewar K."/>
            <person name="Dunn P."/>
            <person name="Etgu P."/>
            <person name="Feldblyum T.V."/>
            <person name="Feng J.-D."/>
            <person name="Fong B."/>
            <person name="Fujii C.Y."/>
            <person name="Gill J.E."/>
            <person name="Goldsmith A.D."/>
            <person name="Haas B."/>
            <person name="Hansen N.F."/>
            <person name="Hughes B."/>
            <person name="Huizar L."/>
            <person name="Hunter J.L."/>
            <person name="Jenkins J."/>
            <person name="Johnson-Hopson C."/>
            <person name="Khan S."/>
            <person name="Khaykin E."/>
            <person name="Kim C.J."/>
            <person name="Koo H.L."/>
            <person name="Kremenetskaia I."/>
            <person name="Kurtz D.B."/>
            <person name="Kwan A."/>
            <person name="Lam B."/>
            <person name="Langin-Hooper S."/>
            <person name="Lee A."/>
            <person name="Lee J.M."/>
            <person name="Lenz C.A."/>
            <person name="Li J.H."/>
            <person name="Li Y.-P."/>
            <person name="Lin X."/>
            <person name="Liu S.X."/>
            <person name="Liu Z.A."/>
            <person name="Luros J.S."/>
            <person name="Maiti R."/>
            <person name="Marziali A."/>
            <person name="Militscher J."/>
            <person name="Miranda M."/>
            <person name="Nguyen M."/>
            <person name="Nierman W.C."/>
            <person name="Osborne B.I."/>
            <person name="Pai G."/>
            <person name="Peterson J."/>
            <person name="Pham P.K."/>
            <person name="Rizzo M."/>
            <person name="Rooney T."/>
            <person name="Rowley D."/>
            <person name="Sakano H."/>
            <person name="Salzberg S.L."/>
            <person name="Schwartz J.R."/>
            <person name="Shinn P."/>
            <person name="Southwick A.M."/>
            <person name="Sun H."/>
            <person name="Tallon L.J."/>
            <person name="Tambunga G."/>
            <person name="Toriumi M.J."/>
            <person name="Town C.D."/>
            <person name="Utterback T."/>
            <person name="Van Aken S."/>
            <person name="Vaysberg M."/>
            <person name="Vysotskaia V.S."/>
            <person name="Walker M."/>
            <person name="Wu D."/>
            <person name="Yu G."/>
            <person name="Fraser C.M."/>
            <person name="Venter J.C."/>
            <person name="Davis R.W."/>
        </authorList>
    </citation>
    <scope>NUCLEOTIDE SEQUENCE [LARGE SCALE GENOMIC DNA]</scope>
    <source>
        <strain>cv. Columbia</strain>
    </source>
</reference>
<reference key="2">
    <citation type="journal article" date="2017" name="Plant J.">
        <title>Araport11: a complete reannotation of the Arabidopsis thaliana reference genome.</title>
        <authorList>
            <person name="Cheng C.Y."/>
            <person name="Krishnakumar V."/>
            <person name="Chan A.P."/>
            <person name="Thibaud-Nissen F."/>
            <person name="Schobel S."/>
            <person name="Town C.D."/>
        </authorList>
    </citation>
    <scope>GENOME REANNOTATION</scope>
    <source>
        <strain>cv. Columbia</strain>
    </source>
</reference>
<reference key="3">
    <citation type="journal article" date="2003" name="Science">
        <title>Empirical analysis of transcriptional activity in the Arabidopsis genome.</title>
        <authorList>
            <person name="Yamada K."/>
            <person name="Lim J."/>
            <person name="Dale J.M."/>
            <person name="Chen H."/>
            <person name="Shinn P."/>
            <person name="Palm C.J."/>
            <person name="Southwick A.M."/>
            <person name="Wu H.C."/>
            <person name="Kim C.J."/>
            <person name="Nguyen M."/>
            <person name="Pham P.K."/>
            <person name="Cheuk R.F."/>
            <person name="Karlin-Newmann G."/>
            <person name="Liu S.X."/>
            <person name="Lam B."/>
            <person name="Sakano H."/>
            <person name="Wu T."/>
            <person name="Yu G."/>
            <person name="Miranda M."/>
            <person name="Quach H.L."/>
            <person name="Tripp M."/>
            <person name="Chang C.H."/>
            <person name="Lee J.M."/>
            <person name="Toriumi M.J."/>
            <person name="Chan M.M."/>
            <person name="Tang C.C."/>
            <person name="Onodera C.S."/>
            <person name="Deng J.M."/>
            <person name="Akiyama K."/>
            <person name="Ansari Y."/>
            <person name="Arakawa T."/>
            <person name="Banh J."/>
            <person name="Banno F."/>
            <person name="Bowser L."/>
            <person name="Brooks S.Y."/>
            <person name="Carninci P."/>
            <person name="Chao Q."/>
            <person name="Choy N."/>
            <person name="Enju A."/>
            <person name="Goldsmith A.D."/>
            <person name="Gurjal M."/>
            <person name="Hansen N.F."/>
            <person name="Hayashizaki Y."/>
            <person name="Johnson-Hopson C."/>
            <person name="Hsuan V.W."/>
            <person name="Iida K."/>
            <person name="Karnes M."/>
            <person name="Khan S."/>
            <person name="Koesema E."/>
            <person name="Ishida J."/>
            <person name="Jiang P.X."/>
            <person name="Jones T."/>
            <person name="Kawai J."/>
            <person name="Kamiya A."/>
            <person name="Meyers C."/>
            <person name="Nakajima M."/>
            <person name="Narusaka M."/>
            <person name="Seki M."/>
            <person name="Sakurai T."/>
            <person name="Satou M."/>
            <person name="Tamse R."/>
            <person name="Vaysberg M."/>
            <person name="Wallender E.K."/>
            <person name="Wong C."/>
            <person name="Yamamura Y."/>
            <person name="Yuan S."/>
            <person name="Shinozaki K."/>
            <person name="Davis R.W."/>
            <person name="Theologis A."/>
            <person name="Ecker J.R."/>
        </authorList>
    </citation>
    <scope>NUCLEOTIDE SEQUENCE [LARGE SCALE MRNA]</scope>
    <source>
        <strain>cv. Columbia</strain>
    </source>
</reference>
<dbReference type="EC" id="4.1.3.44"/>
<dbReference type="EMBL" id="AC025814">
    <property type="protein sequence ID" value="AAG12693.1"/>
    <property type="status" value="ALT_SEQ"/>
    <property type="molecule type" value="Genomic_DNA"/>
</dbReference>
<dbReference type="EMBL" id="CP002684">
    <property type="protein sequence ID" value="AEE35687.1"/>
    <property type="molecule type" value="Genomic_DNA"/>
</dbReference>
<dbReference type="EMBL" id="AY114005">
    <property type="protein sequence ID" value="AAM45053.1"/>
    <property type="molecule type" value="mRNA"/>
</dbReference>
<dbReference type="EMBL" id="AY080784">
    <property type="protein sequence ID" value="AAL87267.1"/>
    <property type="molecule type" value="mRNA"/>
</dbReference>
<dbReference type="PIR" id="C96782">
    <property type="entry name" value="C96782"/>
</dbReference>
<dbReference type="RefSeq" id="NP_177656.2">
    <property type="nucleotide sequence ID" value="NM_106176.6"/>
</dbReference>
<dbReference type="SMR" id="Q8RXN5"/>
<dbReference type="FunCoup" id="Q8RXN5">
    <property type="interactions" value="3468"/>
</dbReference>
<dbReference type="IntAct" id="Q8RXN5">
    <property type="interactions" value="2"/>
</dbReference>
<dbReference type="STRING" id="3702.Q8RXN5"/>
<dbReference type="SwissPalm" id="Q8RXN5"/>
<dbReference type="PaxDb" id="3702-AT1G75200.1"/>
<dbReference type="ProteomicsDB" id="243232"/>
<dbReference type="EnsemblPlants" id="AT1G75200.1">
    <property type="protein sequence ID" value="AT1G75200.1"/>
    <property type="gene ID" value="AT1G75200"/>
</dbReference>
<dbReference type="GeneID" id="843857"/>
<dbReference type="Gramene" id="AT1G75200.1">
    <property type="protein sequence ID" value="AT1G75200.1"/>
    <property type="gene ID" value="AT1G75200"/>
</dbReference>
<dbReference type="KEGG" id="ath:AT1G75200"/>
<dbReference type="Araport" id="AT1G75200"/>
<dbReference type="TAIR" id="AT1G75200"/>
<dbReference type="eggNOG" id="KOG1160">
    <property type="taxonomic scope" value="Eukaryota"/>
</dbReference>
<dbReference type="HOGENOM" id="CLU_007952_2_0_1"/>
<dbReference type="InParanoid" id="Q8RXN5"/>
<dbReference type="OMA" id="TMANIPW"/>
<dbReference type="OrthoDB" id="271553at2759"/>
<dbReference type="PhylomeDB" id="Q8RXN5"/>
<dbReference type="UniPathway" id="UPA00375"/>
<dbReference type="PRO" id="PR:Q8RXN5"/>
<dbReference type="Proteomes" id="UP000006548">
    <property type="component" value="Chromosome 1"/>
</dbReference>
<dbReference type="ExpressionAtlas" id="Q8RXN5">
    <property type="expression patterns" value="baseline and differential"/>
</dbReference>
<dbReference type="GO" id="GO:0005739">
    <property type="term" value="C:mitochondrion"/>
    <property type="evidence" value="ECO:0007005"/>
    <property type="project" value="TAIR"/>
</dbReference>
<dbReference type="GO" id="GO:0051539">
    <property type="term" value="F:4 iron, 4 sulfur cluster binding"/>
    <property type="evidence" value="ECO:0007669"/>
    <property type="project" value="UniProtKB-KW"/>
</dbReference>
<dbReference type="GO" id="GO:0010181">
    <property type="term" value="F:FMN binding"/>
    <property type="evidence" value="ECO:0007669"/>
    <property type="project" value="InterPro"/>
</dbReference>
<dbReference type="GO" id="GO:0046872">
    <property type="term" value="F:metal ion binding"/>
    <property type="evidence" value="ECO:0007669"/>
    <property type="project" value="UniProtKB-KW"/>
</dbReference>
<dbReference type="GO" id="GO:0102521">
    <property type="term" value="F:tRNA-4-demethylwyosine synthase activity"/>
    <property type="evidence" value="ECO:0007669"/>
    <property type="project" value="UniProtKB-EC"/>
</dbReference>
<dbReference type="GO" id="GO:0008033">
    <property type="term" value="P:tRNA processing"/>
    <property type="evidence" value="ECO:0007669"/>
    <property type="project" value="UniProtKB-KW"/>
</dbReference>
<dbReference type="CDD" id="cd01335">
    <property type="entry name" value="Radical_SAM"/>
    <property type="match status" value="1"/>
</dbReference>
<dbReference type="FunFam" id="3.20.20.70:FF:000196">
    <property type="entry name" value="S-adenosyl-L-methionine-dependent tRNA 4-demethylwyosine synthase"/>
    <property type="match status" value="1"/>
</dbReference>
<dbReference type="FunFam" id="3.40.50.360:FF:000092">
    <property type="entry name" value="S-adenosyl-L-methionine-dependent tRNA 4-demethylwyosine synthase"/>
    <property type="match status" value="1"/>
</dbReference>
<dbReference type="Gene3D" id="3.40.50.360">
    <property type="match status" value="1"/>
</dbReference>
<dbReference type="Gene3D" id="3.20.20.70">
    <property type="entry name" value="Aldolase class I"/>
    <property type="match status" value="1"/>
</dbReference>
<dbReference type="InterPro" id="IPR013785">
    <property type="entry name" value="Aldolase_TIM"/>
</dbReference>
<dbReference type="InterPro" id="IPR001094">
    <property type="entry name" value="Flavdoxin-like"/>
</dbReference>
<dbReference type="InterPro" id="IPR008254">
    <property type="entry name" value="Flavodoxin/NO_synth"/>
</dbReference>
<dbReference type="InterPro" id="IPR029039">
    <property type="entry name" value="Flavoprotein-like_sf"/>
</dbReference>
<dbReference type="InterPro" id="IPR007197">
    <property type="entry name" value="rSAM"/>
</dbReference>
<dbReference type="InterPro" id="IPR013917">
    <property type="entry name" value="tRNA_wybutosine-synth"/>
</dbReference>
<dbReference type="InterPro" id="IPR034556">
    <property type="entry name" value="tRNA_wybutosine-synthase"/>
</dbReference>
<dbReference type="PANTHER" id="PTHR13930">
    <property type="entry name" value="S-ADENOSYL-L-METHIONINE-DEPENDENT TRNA 4-DEMETHYLWYOSINE SYNTHASE"/>
    <property type="match status" value="1"/>
</dbReference>
<dbReference type="PANTHER" id="PTHR13930:SF0">
    <property type="entry name" value="S-ADENOSYL-L-METHIONINE-DEPENDENT TRNA 4-DEMETHYLWYOSINE SYNTHASE TYW1-RELATED"/>
    <property type="match status" value="1"/>
</dbReference>
<dbReference type="Pfam" id="PF00258">
    <property type="entry name" value="Flavodoxin_1"/>
    <property type="match status" value="1"/>
</dbReference>
<dbReference type="Pfam" id="PF04055">
    <property type="entry name" value="Radical_SAM"/>
    <property type="match status" value="1"/>
</dbReference>
<dbReference type="Pfam" id="PF08608">
    <property type="entry name" value="Wyosine_form"/>
    <property type="match status" value="1"/>
</dbReference>
<dbReference type="PRINTS" id="PR00369">
    <property type="entry name" value="FLAVODOXIN"/>
</dbReference>
<dbReference type="SFLD" id="SFLDF00284">
    <property type="entry name" value="tRNA_wybutosine-synthesizing"/>
    <property type="match status" value="1"/>
</dbReference>
<dbReference type="SFLD" id="SFLDG01071">
    <property type="entry name" value="tRNA_wybutosine-synthesizing"/>
    <property type="match status" value="1"/>
</dbReference>
<dbReference type="SUPFAM" id="SSF52218">
    <property type="entry name" value="Flavoproteins"/>
    <property type="match status" value="1"/>
</dbReference>
<dbReference type="SUPFAM" id="SSF102114">
    <property type="entry name" value="Radical SAM enzymes"/>
    <property type="match status" value="1"/>
</dbReference>
<dbReference type="PROSITE" id="PS50902">
    <property type="entry name" value="FLAVODOXIN_LIKE"/>
    <property type="match status" value="1"/>
</dbReference>
<dbReference type="PROSITE" id="PS51918">
    <property type="entry name" value="RADICAL_SAM"/>
    <property type="match status" value="1"/>
</dbReference>
<gene>
    <name type="primary">TYW1</name>
    <name type="ordered locus">At1g75200</name>
    <name type="ORF">F22H5.13</name>
</gene>
<accession>Q8RXN5</accession>
<accession>Q9FRL1</accession>
<feature type="chain" id="PRO_0000281832" description="S-adenosyl-L-methionine-dependent tRNA 4-demethylwyosine synthase">
    <location>
        <begin position="1"/>
        <end position="647"/>
    </location>
</feature>
<feature type="domain" description="Flavodoxin-like" evidence="3">
    <location>
        <begin position="50"/>
        <end position="198"/>
    </location>
</feature>
<feature type="domain" description="Radical SAM core" evidence="4">
    <location>
        <begin position="316"/>
        <end position="559"/>
    </location>
</feature>
<feature type="binding site" evidence="3">
    <location>
        <begin position="56"/>
        <end position="60"/>
    </location>
    <ligand>
        <name>FMN</name>
        <dbReference type="ChEBI" id="CHEBI:58210"/>
    </ligand>
</feature>
<feature type="binding site" evidence="3">
    <location>
        <begin position="142"/>
        <end position="174"/>
    </location>
    <ligand>
        <name>FMN</name>
        <dbReference type="ChEBI" id="CHEBI:58210"/>
    </ligand>
</feature>
<feature type="binding site">
    <location>
        <position position="332"/>
    </location>
    <ligand>
        <name>[4Fe-4S] cluster</name>
        <dbReference type="ChEBI" id="CHEBI:49883"/>
        <note>4Fe-4S-S-AdoMet</note>
    </ligand>
</feature>
<feature type="binding site" evidence="2">
    <location>
        <position position="336"/>
    </location>
    <ligand>
        <name>[4Fe-4S] cluster</name>
        <dbReference type="ChEBI" id="CHEBI:49883"/>
        <note>4Fe-4S-S-AdoMet</note>
    </ligand>
</feature>
<feature type="binding site" evidence="2">
    <location>
        <position position="339"/>
    </location>
    <ligand>
        <name>[4Fe-4S] cluster</name>
        <dbReference type="ChEBI" id="CHEBI:49883"/>
        <note>4Fe-4S-S-AdoMet</note>
    </ligand>
</feature>
<evidence type="ECO:0000250" key="1"/>
<evidence type="ECO:0000255" key="2"/>
<evidence type="ECO:0000255" key="3">
    <source>
        <dbReference type="PROSITE-ProRule" id="PRU00088"/>
    </source>
</evidence>
<evidence type="ECO:0000255" key="4">
    <source>
        <dbReference type="PROSITE-ProRule" id="PRU01266"/>
    </source>
</evidence>
<evidence type="ECO:0000305" key="5"/>
<comment type="function">
    <text evidence="1">Probable component of the wybutosine biosynthesis pathway. Wybutosine is a hyper modified guanosine with a tricyclic base found at the 3'-position adjacent to the anticodon of eukaryotic phenylalanine tRNA. Catalyzes the condensation of N-methylguanine with 2 carbon atoms from pyruvate to form the tricyclic 4-demethylwyosine, an intermediate in wybutosine biosynthesis (By similarity).</text>
</comment>
<comment type="catalytic activity">
    <reaction>
        <text>N(1)-methylguanosine(37) in tRNA(Phe) + pyruvate + S-adenosyl-L-methionine = 4-demethylwyosine(37) in tRNA(Phe) + 5'-deoxyadenosine + L-methionine + CO2 + H2O</text>
        <dbReference type="Rhea" id="RHEA:36347"/>
        <dbReference type="Rhea" id="RHEA-COMP:10164"/>
        <dbReference type="Rhea" id="RHEA-COMP:10165"/>
        <dbReference type="ChEBI" id="CHEBI:15361"/>
        <dbReference type="ChEBI" id="CHEBI:15377"/>
        <dbReference type="ChEBI" id="CHEBI:16526"/>
        <dbReference type="ChEBI" id="CHEBI:17319"/>
        <dbReference type="ChEBI" id="CHEBI:57844"/>
        <dbReference type="ChEBI" id="CHEBI:59789"/>
        <dbReference type="ChEBI" id="CHEBI:64315"/>
        <dbReference type="ChEBI" id="CHEBI:73542"/>
        <dbReference type="EC" id="4.1.3.44"/>
    </reaction>
</comment>
<comment type="cofactor">
    <cofactor evidence="1">
        <name>[4Fe-4S] cluster</name>
        <dbReference type="ChEBI" id="CHEBI:49883"/>
    </cofactor>
    <text evidence="1">Binds 1 [4Fe-4S] cluster. The cluster is coordinated with 3 cysteines and an exchangeable S-adenosyl-L-methionine.</text>
</comment>
<comment type="pathway">
    <text>tRNA modification; wybutosine-tRNA(Phe) biosynthesis.</text>
</comment>
<comment type="similarity">
    <text evidence="5">Belongs to the TYW1 family.</text>
</comment>
<comment type="sequence caution" evidence="5">
    <conflict type="erroneous gene model prediction">
        <sequence resource="EMBL-CDS" id="AAG12693"/>
    </conflict>
</comment>
<name>TYW1_ARATH</name>
<organism>
    <name type="scientific">Arabidopsis thaliana</name>
    <name type="common">Mouse-ear cress</name>
    <dbReference type="NCBI Taxonomy" id="3702"/>
    <lineage>
        <taxon>Eukaryota</taxon>
        <taxon>Viridiplantae</taxon>
        <taxon>Streptophyta</taxon>
        <taxon>Embryophyta</taxon>
        <taxon>Tracheophyta</taxon>
        <taxon>Spermatophyta</taxon>
        <taxon>Magnoliopsida</taxon>
        <taxon>eudicotyledons</taxon>
        <taxon>Gunneridae</taxon>
        <taxon>Pentapetalae</taxon>
        <taxon>rosids</taxon>
        <taxon>malvids</taxon>
        <taxon>Brassicales</taxon>
        <taxon>Brassicaceae</taxon>
        <taxon>Camelineae</taxon>
        <taxon>Arabidopsis</taxon>
    </lineage>
</organism>
<proteinExistence type="evidence at transcript level"/>
<protein>
    <recommendedName>
        <fullName>S-adenosyl-L-methionine-dependent tRNA 4-demethylwyosine synthase</fullName>
        <ecNumber>4.1.3.44</ecNumber>
    </recommendedName>
    <alternativeName>
        <fullName>tRNA wybutosine-synthesizing protein 1 homolog</fullName>
    </alternativeName>
</protein>